<evidence type="ECO:0000269" key="1">
    <source>
    </source>
</evidence>
<evidence type="ECO:0000303" key="2">
    <source>
    </source>
</evidence>
<evidence type="ECO:0000303" key="3">
    <source>
    </source>
</evidence>
<evidence type="ECO:0000305" key="4"/>
<sequence>ALWKNMLKGIGKLAGQAALGAVKTLVGAES</sequence>
<protein>
    <recommendedName>
        <fullName evidence="3">Dermaseptin-DI4</fullName>
        <shortName evidence="3">DRS-DI4</shortName>
    </recommendedName>
    <alternativeName>
        <fullName evidence="2">Dermadistinctin-Q1</fullName>
        <shortName evidence="2">DD Q1</shortName>
    </alternativeName>
</protein>
<accession>P83641</accession>
<keyword id="KW-0878">Amphibian defense peptide</keyword>
<keyword id="KW-0044">Antibiotic</keyword>
<keyword id="KW-0929">Antimicrobial</keyword>
<keyword id="KW-0903">Direct protein sequencing</keyword>
<keyword id="KW-0964">Secreted</keyword>
<name>DRS4_PHYDS</name>
<feature type="peptide" id="PRO_0000043638" description="Dermaseptin-DI4">
    <location>
        <begin position="1"/>
        <end position="30"/>
    </location>
</feature>
<proteinExistence type="evidence at protein level"/>
<comment type="function">
    <text evidence="1">Antibacterial activity against Gram-positive bacteria S.aureus and E.faecalis, and Gram-negative bacteria P.aeruginosa and E.coli.</text>
</comment>
<comment type="subcellular location">
    <subcellularLocation>
        <location evidence="1">Secreted</location>
    </subcellularLocation>
</comment>
<comment type="tissue specificity">
    <text evidence="1">Expressed by the skin glands.</text>
</comment>
<comment type="mass spectrometry"/>
<comment type="similarity">
    <text evidence="4">Belongs to the frog skin active peptide (FSAP) family. Dermaseptin subfamily.</text>
</comment>
<comment type="online information" name="The antimicrobial peptide database">
    <link uri="https://wangapd3.com/database/query_output.php?ID=0961"/>
</comment>
<organism evidence="4">
    <name type="scientific">Phyllomedusa distincta</name>
    <name type="common">Monkey frog</name>
    <dbReference type="NCBI Taxonomy" id="164618"/>
    <lineage>
        <taxon>Eukaryota</taxon>
        <taxon>Metazoa</taxon>
        <taxon>Chordata</taxon>
        <taxon>Craniata</taxon>
        <taxon>Vertebrata</taxon>
        <taxon>Euteleostomi</taxon>
        <taxon>Amphibia</taxon>
        <taxon>Batrachia</taxon>
        <taxon>Anura</taxon>
        <taxon>Neobatrachia</taxon>
        <taxon>Hyloidea</taxon>
        <taxon>Hylidae</taxon>
        <taxon>Phyllomedusinae</taxon>
        <taxon>Phyllomedusa</taxon>
    </lineage>
</organism>
<dbReference type="GO" id="GO:0005576">
    <property type="term" value="C:extracellular region"/>
    <property type="evidence" value="ECO:0007669"/>
    <property type="project" value="UniProtKB-SubCell"/>
</dbReference>
<dbReference type="GO" id="GO:0042742">
    <property type="term" value="P:defense response to bacterium"/>
    <property type="evidence" value="ECO:0007669"/>
    <property type="project" value="UniProtKB-KW"/>
</dbReference>
<dbReference type="InterPro" id="IPR022731">
    <property type="entry name" value="Dermaseptin_dom"/>
</dbReference>
<dbReference type="Pfam" id="PF12121">
    <property type="entry name" value="DD_K"/>
    <property type="match status" value="1"/>
</dbReference>
<reference key="1">
    <citation type="journal article" date="1999" name="Peptides">
        <title>Antimicrobial peptides from the Brazilian frog Phyllomedusa distincta.</title>
        <authorList>
            <person name="Batista C.V.F."/>
            <person name="da Silva L.R."/>
            <person name="Sebben A."/>
            <person name="Scaloni A."/>
            <person name="Ferrara L."/>
            <person name="Paiva G.R."/>
            <person name="Olamendi-Portugal T."/>
            <person name="Possani L.D."/>
            <person name="Bloch C. Jr."/>
        </authorList>
    </citation>
    <scope>PROTEIN SEQUENCE</scope>
    <scope>FUNCTION</scope>
    <scope>SUBCELLULAR LOCATION</scope>
    <scope>TISSUE SPECIFICITY</scope>
    <scope>MASS SPECTROMETRY</scope>
    <scope>CIRCULAR DICHROISM ANALYSIS</scope>
    <scope>SYNTHESIS</scope>
    <source>
        <tissue>Skin secretion</tissue>
    </source>
</reference>
<reference key="2">
    <citation type="journal article" date="2008" name="Peptides">
        <title>A consistent nomenclature of antimicrobial peptides isolated from frogs of the subfamily Phyllomedusinae.</title>
        <authorList>
            <person name="Amiche M."/>
            <person name="Ladram A."/>
            <person name="Nicolas P."/>
        </authorList>
    </citation>
    <scope>NOMENCLATURE</scope>
</reference>